<protein>
    <recommendedName>
        <fullName>5'-AMP-activated protein kinase catalytic subunit alpha-1</fullName>
        <shortName>AMPK subunit alpha-1</shortName>
        <ecNumber evidence="2">2.7.11.1</ecNumber>
    </recommendedName>
    <alternativeName>
        <fullName>Acetyl-CoA carboxylase kinase</fullName>
        <shortName>ACACA kinase</shortName>
    </alternativeName>
    <alternativeName>
        <fullName>Hydroxymethylglutaryl-CoA reductase kinase</fullName>
        <shortName>HMGCR kinase</shortName>
        <ecNumber evidence="2">2.7.11.31</ecNumber>
    </alternativeName>
    <alternativeName>
        <fullName>Tau-protein kinase PRKAA1</fullName>
        <ecNumber evidence="2">2.7.11.26</ecNumber>
    </alternativeName>
</protein>
<feature type="chain" id="PRO_0000085592" description="5'-AMP-activated protein kinase catalytic subunit alpha-1">
    <location>
        <begin position="1" status="less than"/>
        <end position="554"/>
    </location>
</feature>
<feature type="domain" description="Protein kinase" evidence="5">
    <location>
        <begin position="22"/>
        <end position="274"/>
    </location>
</feature>
<feature type="region of interest" description="AIS" evidence="3">
    <location>
        <begin position="297"/>
        <end position="376"/>
    </location>
</feature>
<feature type="region of interest" description="Disordered" evidence="7">
    <location>
        <begin position="480"/>
        <end position="531"/>
    </location>
</feature>
<feature type="compositionally biased region" description="Polar residues" evidence="7">
    <location>
        <begin position="480"/>
        <end position="500"/>
    </location>
</feature>
<feature type="compositionally biased region" description="Low complexity" evidence="7">
    <location>
        <begin position="511"/>
        <end position="530"/>
    </location>
</feature>
<feature type="active site" description="Proton acceptor" evidence="5 6">
    <location>
        <position position="145"/>
    </location>
</feature>
<feature type="binding site" evidence="5">
    <location>
        <begin position="28"/>
        <end position="36"/>
    </location>
    <ligand>
        <name>ATP</name>
        <dbReference type="ChEBI" id="CHEBI:30616"/>
    </ligand>
</feature>
<feature type="binding site" evidence="5">
    <location>
        <position position="51"/>
    </location>
    <ligand>
        <name>ATP</name>
        <dbReference type="ChEBI" id="CHEBI:30616"/>
    </ligand>
</feature>
<feature type="modified residue" description="Phosphothreonine" evidence="3">
    <location>
        <position position="27"/>
    </location>
</feature>
<feature type="modified residue" description="Phosphothreonine; by LKB1 and CaMKK2" evidence="4">
    <location>
        <position position="178"/>
    </location>
</feature>
<feature type="modified residue" description="Phosphothreonine" evidence="2">
    <location>
        <position position="264"/>
    </location>
</feature>
<feature type="modified residue" description="Phosphothreonine" evidence="3">
    <location>
        <position position="350"/>
    </location>
</feature>
<feature type="modified residue" description="Phosphoserine" evidence="3">
    <location>
        <position position="351"/>
    </location>
</feature>
<feature type="modified residue" description="Phosphoserine; by ULK1" evidence="2">
    <location>
        <position position="355"/>
    </location>
</feature>
<feature type="modified residue" description="Phosphothreonine; by ULK1" evidence="2">
    <location>
        <position position="363"/>
    </location>
</feature>
<feature type="modified residue" description="Phosphothreonine" evidence="3">
    <location>
        <position position="377"/>
    </location>
</feature>
<feature type="modified residue" description="Phosphoserine; by ULK1" evidence="2">
    <location>
        <position position="392"/>
    </location>
</feature>
<feature type="modified residue" description="Phosphoserine" evidence="3">
    <location>
        <position position="462"/>
    </location>
</feature>
<feature type="modified residue" description="Phosphoserine; by ULK1" evidence="2">
    <location>
        <position position="481"/>
    </location>
</feature>
<feature type="modified residue" description="Phosphothreonine; by ULK1" evidence="2">
    <location>
        <position position="483"/>
    </location>
</feature>
<feature type="modified residue" description="Phosphothreonine" evidence="3">
    <location>
        <position position="485"/>
    </location>
</feature>
<feature type="modified residue" description="Phosphoserine" evidence="3">
    <location>
        <position position="491"/>
    </location>
</feature>
<feature type="modified residue" description="Phosphoserine" evidence="3">
    <location>
        <position position="503"/>
    </location>
</feature>
<feature type="modified residue" description="Phosphoserine" evidence="3">
    <location>
        <position position="519"/>
    </location>
</feature>
<feature type="modified residue" description="Phosphoserine" evidence="3">
    <location>
        <position position="522"/>
    </location>
</feature>
<feature type="non-terminal residue">
    <location>
        <position position="1"/>
    </location>
</feature>
<comment type="function">
    <text evidence="2 3 4">Catalytic subunit of AMP-activated protein kinase (AMPK), an energy sensor protein kinase that plays a key role in regulating cellular energy metabolism. In response to reduction of intracellular ATP levels, AMPK activates energy-producing pathways and inhibits energy-consuming processes: inhibits protein, carbohydrate and lipid biosynthesis, as well as cell growth and proliferation. AMPK acts via direct phosphorylation of metabolic enzymes, and by longer-term effects via phosphorylation of transcription regulators (By similarity). Regulates lipid synthesis by phosphorylating and inactivating lipid metabolic enzymes such as ACACA, ACACB, GYS1, HMGCR and LIPE; regulates fatty acid and cholesterol synthesis by phosphorylating acetyl-CoA carboxylase (ACACA and ACACB) and hormone-sensitive lipase (LIPE) enzymes, respectively (By similarity). Promotes lipolysis of lipid droplets by mediating phosphorylation of isoform 1 of CHKA (CHKalpha2) (By similarity). Regulates insulin-signaling and glycolysis by phosphorylating IRS1, PFKFB2 and PFKFB3 (By similarity). AMPK stimulates glucose uptake in muscle by increasing the translocation of the glucose transporter SLC2A4/GLUT4 to the plasma membrane, possibly by mediating phosphorylation of TBC1D4/AS160 (By similarity). Regulates transcription and chromatin structure by phosphorylating transcription regulators involved in energy metabolism such as CRTC2/TORC2, FOXO3, histone H2B, HDAC5, MEF2C, MLXIPL/ChREBP, EP300, HNF4A, p53/TP53, SREBF1, SREBF2 and PPARGC1A (By similarity). Acts as a key regulator of glucose homeostasis in liver by phosphorylating CRTC2/TORC2, leading to CRTC2/TORC2 sequestration in the cytoplasm. In response to stress, phosphorylates 'Ser-36' of histone H2B (H2BS36ph), leading to promote transcription (By similarity). Acts as a key regulator of cell growth and proliferation by phosphorylating FNIP1, TSC2, RPTOR, WDR24 and ATG1/ULK1: in response to nutrient limitation, negatively regulates the mTORC1 complex by phosphorylating RPTOR component of the mTORC1 complex and by phosphorylating and activating TSC2. Also phosphorylates and inhibits GATOR2 subunit WDR24 in response to nutrient limitation, leading to suppress glucose-mediated mTORC1 activation (By similarity). In response to energetic stress, phosphorylates FNIP1, inactivating the non-canonical mTORC1 signaling, thereby promoting nuclear translocation of TFEB and TFE3, and inducing transcription of lysosomal or autophagy genes (By similarity). In response to nutrient limitation, promotes autophagy by phosphorylating and activating ATG1/ULK1. In that process also activates WDR45/WIPI4. Phosphorylates CASP6, thereby preventing its autoprocessing and subsequent activation (By similarity). In response to nutrient limitation, phosphorylates transcription factor FOXO3 promoting FOXO3 mitochondrial import (By similarity). Also acts as a regulator of cellular polarity by remodeling the actin cytoskeleton; probably by indirectly activating myosin (By similarity). AMPK also acts as a regulator of circadian rhythm by mediating phosphorylation of CRY1, leading to destabilize it. May regulate the Wnt signaling pathway by phosphorylating CTNNB1, leading to stabilize it (By similarity). Also has tau-protein kinase activity: in response to amyloid beta A4 protein (APP) exposure, activated by CAMKK2, leading to phosphorylation of MAPT/TAU; however the relevance of such data remains unclear in vivo (By similarity). Also phosphorylates CFTR, EEF2K, KLC1, NOS3 and SLC12A1 (By similarity). Regulates hepatic lipogenesis. Activated via SIRT3, represses sterol regulatory element-binding protein (SREBP) transcriptional activities and ATP-consuming lipogenesis to restore cellular energy balance. Upon stress, regulates mitochondrial fragmentation through phosphorylation of MTFR1L (By similarity).</text>
</comment>
<comment type="catalytic activity">
    <reaction evidence="2">
        <text>L-seryl-[protein] + ATP = O-phospho-L-seryl-[protein] + ADP + H(+)</text>
        <dbReference type="Rhea" id="RHEA:17989"/>
        <dbReference type="Rhea" id="RHEA-COMP:9863"/>
        <dbReference type="Rhea" id="RHEA-COMP:11604"/>
        <dbReference type="ChEBI" id="CHEBI:15378"/>
        <dbReference type="ChEBI" id="CHEBI:29999"/>
        <dbReference type="ChEBI" id="CHEBI:30616"/>
        <dbReference type="ChEBI" id="CHEBI:83421"/>
        <dbReference type="ChEBI" id="CHEBI:456216"/>
        <dbReference type="EC" id="2.7.11.1"/>
    </reaction>
</comment>
<comment type="catalytic activity">
    <reaction evidence="2">
        <text>L-threonyl-[protein] + ATP = O-phospho-L-threonyl-[protein] + ADP + H(+)</text>
        <dbReference type="Rhea" id="RHEA:46608"/>
        <dbReference type="Rhea" id="RHEA-COMP:11060"/>
        <dbReference type="Rhea" id="RHEA-COMP:11605"/>
        <dbReference type="ChEBI" id="CHEBI:15378"/>
        <dbReference type="ChEBI" id="CHEBI:30013"/>
        <dbReference type="ChEBI" id="CHEBI:30616"/>
        <dbReference type="ChEBI" id="CHEBI:61977"/>
        <dbReference type="ChEBI" id="CHEBI:456216"/>
        <dbReference type="EC" id="2.7.11.1"/>
    </reaction>
</comment>
<comment type="catalytic activity">
    <reaction evidence="2">
        <text>L-seryl-[acetyl-CoA carboxylase] + ATP = O-phospho-L-seryl-[acetyl-CoA carboxylase] + ADP + H(+)</text>
        <dbReference type="Rhea" id="RHEA:20333"/>
        <dbReference type="Rhea" id="RHEA-COMP:13722"/>
        <dbReference type="Rhea" id="RHEA-COMP:13723"/>
        <dbReference type="ChEBI" id="CHEBI:15378"/>
        <dbReference type="ChEBI" id="CHEBI:29999"/>
        <dbReference type="ChEBI" id="CHEBI:30616"/>
        <dbReference type="ChEBI" id="CHEBI:83421"/>
        <dbReference type="ChEBI" id="CHEBI:456216"/>
    </reaction>
</comment>
<comment type="catalytic activity">
    <reaction evidence="2">
        <text>L-seryl-[3-hydroxy-3-methylglutaryl-coenzyme A reductase] + ATP = O-phospho-L-seryl-[3-hydroxy-3-methylglutaryl-coenzyme A reductase] + ADP + H(+)</text>
        <dbReference type="Rhea" id="RHEA:23172"/>
        <dbReference type="Rhea" id="RHEA-COMP:13692"/>
        <dbReference type="Rhea" id="RHEA-COMP:13693"/>
        <dbReference type="ChEBI" id="CHEBI:15378"/>
        <dbReference type="ChEBI" id="CHEBI:29999"/>
        <dbReference type="ChEBI" id="CHEBI:30616"/>
        <dbReference type="ChEBI" id="CHEBI:83421"/>
        <dbReference type="ChEBI" id="CHEBI:456216"/>
        <dbReference type="EC" id="2.7.11.31"/>
    </reaction>
</comment>
<comment type="catalytic activity">
    <reaction evidence="2">
        <text>L-seryl-[tau protein] + ATP = O-phospho-L-seryl-[tau protein] + ADP + H(+)</text>
        <dbReference type="Rhea" id="RHEA:12801"/>
        <dbReference type="Rhea" id="RHEA-COMP:13701"/>
        <dbReference type="Rhea" id="RHEA-COMP:13702"/>
        <dbReference type="ChEBI" id="CHEBI:15378"/>
        <dbReference type="ChEBI" id="CHEBI:29999"/>
        <dbReference type="ChEBI" id="CHEBI:30616"/>
        <dbReference type="ChEBI" id="CHEBI:83421"/>
        <dbReference type="ChEBI" id="CHEBI:456216"/>
        <dbReference type="EC" id="2.7.11.26"/>
    </reaction>
</comment>
<comment type="catalytic activity">
    <reaction evidence="2">
        <text>L-threonyl-[tau protein] + ATP = O-phospho-L-threonyl-[tau protein] + ADP + H(+)</text>
        <dbReference type="Rhea" id="RHEA:53904"/>
        <dbReference type="Rhea" id="RHEA-COMP:13703"/>
        <dbReference type="Rhea" id="RHEA-COMP:13704"/>
        <dbReference type="ChEBI" id="CHEBI:15378"/>
        <dbReference type="ChEBI" id="CHEBI:30013"/>
        <dbReference type="ChEBI" id="CHEBI:30616"/>
        <dbReference type="ChEBI" id="CHEBI:61977"/>
        <dbReference type="ChEBI" id="CHEBI:456216"/>
        <dbReference type="EC" id="2.7.11.26"/>
    </reaction>
</comment>
<comment type="cofactor">
    <cofactor evidence="1">
        <name>Mg(2+)</name>
        <dbReference type="ChEBI" id="CHEBI:18420"/>
    </cofactor>
</comment>
<comment type="activity regulation">
    <text evidence="3">Activated by phosphorylation on Thr-183. Binding of AMP to non-catalytic gamma subunit (PRKAG1, PRKAG2 or PRKAG3) results in allosteric activation, inducing phosphorylation on Thr-183. AMP-binding to gamma subunit also sustains activity by preventing dephosphorylation of Thr-183. ADP also stimulates Thr-183 phosphorylation, without stimulating already phosphorylated AMPK. ATP promotes dephosphorylation of Thr-183, rendering the enzyme inactive. Under physiological conditions AMPK mainly exists in its inactive form in complex with ATP, which is much more abundant than AMP. Selectively inhibited by compound C (6-[4-(2-Piperidin-1-yl-ethoxy)-phenyl)]-3-pyridin-4-yl-pyyrazolo[1,5-a] pyrimidine. Activated by resveratrol, a natural polyphenol present in red wine, and S17834, a synthetic polyphenol (By similarity).</text>
</comment>
<comment type="subunit">
    <text evidence="3">AMPK is a heterotrimer of an alpha catalytic subunit (PRKAA1 or PRKAA2), a beta (PRKAB1 or PRKAB2) and a gamma non-catalytic subunits (PRKAG1, PRKAG2 or PRKAG3). Interacts with FNIP1 and FNIP2.</text>
</comment>
<comment type="subcellular location">
    <subcellularLocation>
        <location evidence="3">Cytoplasm</location>
    </subcellularLocation>
    <subcellularLocation>
        <location evidence="3">Nucleus</location>
    </subcellularLocation>
    <text evidence="3">In response to stress, recruited by p53/TP53 to specific promoters.</text>
</comment>
<comment type="domain">
    <text evidence="3">The AIS (autoinhibitory sequence) region shows some sequence similarity with the ubiquitin-associated domains and represses kinase activity.</text>
</comment>
<comment type="PTM">
    <text evidence="4">Ubiquitinated.</text>
</comment>
<comment type="PTM">
    <text evidence="3">Phosphorylated at Thr-183 by STK11/LKB1 in complex with STE20-related adapter-alpha (STRADA) pseudo kinase and CAB39. Also phosphorylated at Thr-183 by CAMKK2; triggered by a rise in intracellular calcium ions, without detectable changes in the AMP/ATP ratio. CAMKK1 can also phosphorylate Thr-183, but at a much lower level. Dephosphorylated by protein phosphatase 2A and 2C (PP2A and PP2C). Phosphorylated by ULK1 and ULK2; leading to negatively regulate AMPK activity and suggesting the existence of a regulatory feedback loop between ULK1, ULK2 and AMPK (By similarity). Dephosphorylated by PPM1A and PPM1B (By similarity).</text>
</comment>
<comment type="PTM">
    <text evidence="3">Glycosylated; O-GlcNAcylated by OGT, promoting the AMP-activated protein kinase (AMPK) activity.</text>
</comment>
<comment type="similarity">
    <text evidence="8">Belongs to the protein kinase superfamily. CAMK Ser/Thr protein kinase family. SNF1 subfamily.</text>
</comment>
<comment type="sequence caution" evidence="8">
    <conflict type="erroneous initiation">
        <sequence resource="EMBL-CDS" id="CAH90182"/>
    </conflict>
    <text>Truncated N-terminus.</text>
</comment>
<proteinExistence type="evidence at transcript level"/>
<organism>
    <name type="scientific">Pongo abelii</name>
    <name type="common">Sumatran orangutan</name>
    <name type="synonym">Pongo pygmaeus abelii</name>
    <dbReference type="NCBI Taxonomy" id="9601"/>
    <lineage>
        <taxon>Eukaryota</taxon>
        <taxon>Metazoa</taxon>
        <taxon>Chordata</taxon>
        <taxon>Craniata</taxon>
        <taxon>Vertebrata</taxon>
        <taxon>Euteleostomi</taxon>
        <taxon>Mammalia</taxon>
        <taxon>Eutheria</taxon>
        <taxon>Euarchontoglires</taxon>
        <taxon>Primates</taxon>
        <taxon>Haplorrhini</taxon>
        <taxon>Catarrhini</taxon>
        <taxon>Hominidae</taxon>
        <taxon>Pongo</taxon>
    </lineage>
</organism>
<keyword id="KW-0067">ATP-binding</keyword>
<keyword id="KW-0072">Autophagy</keyword>
<keyword id="KW-0090">Biological rhythms</keyword>
<keyword id="KW-0152">Cholesterol biosynthesis</keyword>
<keyword id="KW-0153">Cholesterol metabolism</keyword>
<keyword id="KW-0156">Chromatin regulator</keyword>
<keyword id="KW-0963">Cytoplasm</keyword>
<keyword id="KW-0275">Fatty acid biosynthesis</keyword>
<keyword id="KW-0276">Fatty acid metabolism</keyword>
<keyword id="KW-0325">Glycoprotein</keyword>
<keyword id="KW-0418">Kinase</keyword>
<keyword id="KW-0444">Lipid biosynthesis</keyword>
<keyword id="KW-0443">Lipid metabolism</keyword>
<keyword id="KW-0460">Magnesium</keyword>
<keyword id="KW-0479">Metal-binding</keyword>
<keyword id="KW-0547">Nucleotide-binding</keyword>
<keyword id="KW-0539">Nucleus</keyword>
<keyword id="KW-0597">Phosphoprotein</keyword>
<keyword id="KW-1185">Reference proteome</keyword>
<keyword id="KW-0723">Serine/threonine-protein kinase</keyword>
<keyword id="KW-0752">Steroid biosynthesis</keyword>
<keyword id="KW-0753">Steroid metabolism</keyword>
<keyword id="KW-0756">Sterol biosynthesis</keyword>
<keyword id="KW-1207">Sterol metabolism</keyword>
<keyword id="KW-0804">Transcription</keyword>
<keyword id="KW-0805">Transcription regulation</keyword>
<keyword id="KW-0808">Transferase</keyword>
<keyword id="KW-0832">Ubl conjugation</keyword>
<keyword id="KW-0879">Wnt signaling pathway</keyword>
<reference key="1">
    <citation type="submission" date="2004-11" db="EMBL/GenBank/DDBJ databases">
        <authorList>
            <consortium name="The German cDNA consortium"/>
        </authorList>
    </citation>
    <scope>NUCLEOTIDE SEQUENCE [LARGE SCALE MRNA]</scope>
    <source>
        <tissue>Kidney</tissue>
    </source>
</reference>
<gene>
    <name type="primary">PRKAA1</name>
</gene>
<evidence type="ECO:0000250" key="1"/>
<evidence type="ECO:0000250" key="2">
    <source>
        <dbReference type="UniProtKB" id="P54645"/>
    </source>
</evidence>
<evidence type="ECO:0000250" key="3">
    <source>
        <dbReference type="UniProtKB" id="Q13131"/>
    </source>
</evidence>
<evidence type="ECO:0000250" key="4">
    <source>
        <dbReference type="UniProtKB" id="Q5EG47"/>
    </source>
</evidence>
<evidence type="ECO:0000255" key="5">
    <source>
        <dbReference type="PROSITE-ProRule" id="PRU00159"/>
    </source>
</evidence>
<evidence type="ECO:0000255" key="6">
    <source>
        <dbReference type="PROSITE-ProRule" id="PRU10027"/>
    </source>
</evidence>
<evidence type="ECO:0000256" key="7">
    <source>
        <dbReference type="SAM" id="MobiDB-lite"/>
    </source>
</evidence>
<evidence type="ECO:0000305" key="8"/>
<accession>Q5RDH5</accession>
<dbReference type="EC" id="2.7.11.1" evidence="2"/>
<dbReference type="EC" id="2.7.11.31" evidence="2"/>
<dbReference type="EC" id="2.7.11.26" evidence="2"/>
<dbReference type="EMBL" id="CR857935">
    <property type="protein sequence ID" value="CAH90182.1"/>
    <property type="status" value="ALT_INIT"/>
    <property type="molecule type" value="mRNA"/>
</dbReference>
<dbReference type="RefSeq" id="NP_001127249.1">
    <property type="nucleotide sequence ID" value="NM_001133777.1"/>
</dbReference>
<dbReference type="SMR" id="Q5RDH5"/>
<dbReference type="STRING" id="9601.ENSPPYP00000017227"/>
<dbReference type="GeneID" id="100174304"/>
<dbReference type="KEGG" id="pon:100174304"/>
<dbReference type="CTD" id="5562"/>
<dbReference type="eggNOG" id="KOG0583">
    <property type="taxonomic scope" value="Eukaryota"/>
</dbReference>
<dbReference type="InParanoid" id="Q5RDH5"/>
<dbReference type="OrthoDB" id="193931at2759"/>
<dbReference type="Proteomes" id="UP000001595">
    <property type="component" value="Unplaced"/>
</dbReference>
<dbReference type="GO" id="GO:0005737">
    <property type="term" value="C:cytoplasm"/>
    <property type="evidence" value="ECO:0007669"/>
    <property type="project" value="UniProtKB-SubCell"/>
</dbReference>
<dbReference type="GO" id="GO:0031588">
    <property type="term" value="C:nucleotide-activated protein kinase complex"/>
    <property type="evidence" value="ECO:0000250"/>
    <property type="project" value="UniProtKB"/>
</dbReference>
<dbReference type="GO" id="GO:0005634">
    <property type="term" value="C:nucleus"/>
    <property type="evidence" value="ECO:0000250"/>
    <property type="project" value="UniProtKB"/>
</dbReference>
<dbReference type="GO" id="GO:0047322">
    <property type="term" value="F:[hydroxymethylglutaryl-CoA reductase (NADPH)] kinase activity"/>
    <property type="evidence" value="ECO:0007669"/>
    <property type="project" value="UniProtKB-EC"/>
</dbReference>
<dbReference type="GO" id="GO:0004679">
    <property type="term" value="F:AMP-activated protein kinase activity"/>
    <property type="evidence" value="ECO:0000250"/>
    <property type="project" value="UniProtKB"/>
</dbReference>
<dbReference type="GO" id="GO:0005524">
    <property type="term" value="F:ATP binding"/>
    <property type="evidence" value="ECO:0007669"/>
    <property type="project" value="UniProtKB-KW"/>
</dbReference>
<dbReference type="GO" id="GO:0003682">
    <property type="term" value="F:chromatin binding"/>
    <property type="evidence" value="ECO:0000250"/>
    <property type="project" value="UniProtKB"/>
</dbReference>
<dbReference type="GO" id="GO:0140823">
    <property type="term" value="F:histone H2BS36 kinase activity"/>
    <property type="evidence" value="ECO:0000250"/>
    <property type="project" value="UniProtKB"/>
</dbReference>
<dbReference type="GO" id="GO:0046872">
    <property type="term" value="F:metal ion binding"/>
    <property type="evidence" value="ECO:0007669"/>
    <property type="project" value="UniProtKB-KW"/>
</dbReference>
<dbReference type="GO" id="GO:0106310">
    <property type="term" value="F:protein serine kinase activity"/>
    <property type="evidence" value="ECO:0007669"/>
    <property type="project" value="RHEA"/>
</dbReference>
<dbReference type="GO" id="GO:0004674">
    <property type="term" value="F:protein serine/threonine kinase activity"/>
    <property type="evidence" value="ECO:0000250"/>
    <property type="project" value="UniProtKB"/>
</dbReference>
<dbReference type="GO" id="GO:0006914">
    <property type="term" value="P:autophagy"/>
    <property type="evidence" value="ECO:0007669"/>
    <property type="project" value="UniProtKB-KW"/>
</dbReference>
<dbReference type="GO" id="GO:0042149">
    <property type="term" value="P:cellular response to glucose starvation"/>
    <property type="evidence" value="ECO:0000250"/>
    <property type="project" value="UniProtKB"/>
</dbReference>
<dbReference type="GO" id="GO:0031669">
    <property type="term" value="P:cellular response to nutrient levels"/>
    <property type="evidence" value="ECO:0000250"/>
    <property type="project" value="UniProtKB"/>
</dbReference>
<dbReference type="GO" id="GO:0006695">
    <property type="term" value="P:cholesterol biosynthetic process"/>
    <property type="evidence" value="ECO:0007669"/>
    <property type="project" value="UniProtKB-KW"/>
</dbReference>
<dbReference type="GO" id="GO:0097009">
    <property type="term" value="P:energy homeostasis"/>
    <property type="evidence" value="ECO:0000250"/>
    <property type="project" value="UniProtKB"/>
</dbReference>
<dbReference type="GO" id="GO:0006633">
    <property type="term" value="P:fatty acid biosynthetic process"/>
    <property type="evidence" value="ECO:0007669"/>
    <property type="project" value="UniProtKB-KW"/>
</dbReference>
<dbReference type="GO" id="GO:0055089">
    <property type="term" value="P:fatty acid homeostasis"/>
    <property type="evidence" value="ECO:0000250"/>
    <property type="project" value="UniProtKB"/>
</dbReference>
<dbReference type="GO" id="GO:0042593">
    <property type="term" value="P:glucose homeostasis"/>
    <property type="evidence" value="ECO:0000250"/>
    <property type="project" value="UniProtKB"/>
</dbReference>
<dbReference type="GO" id="GO:0035556">
    <property type="term" value="P:intracellular signal transduction"/>
    <property type="evidence" value="ECO:0007669"/>
    <property type="project" value="TreeGrafter"/>
</dbReference>
<dbReference type="GO" id="GO:0008610">
    <property type="term" value="P:lipid biosynthetic process"/>
    <property type="evidence" value="ECO:0000250"/>
    <property type="project" value="UniProtKB"/>
</dbReference>
<dbReference type="GO" id="GO:1905691">
    <property type="term" value="P:lipid droplet disassembly"/>
    <property type="evidence" value="ECO:0000250"/>
    <property type="project" value="UniProtKB"/>
</dbReference>
<dbReference type="GO" id="GO:0043066">
    <property type="term" value="P:negative regulation of apoptotic process"/>
    <property type="evidence" value="ECO:0000250"/>
    <property type="project" value="UniProtKB"/>
</dbReference>
<dbReference type="GO" id="GO:1903944">
    <property type="term" value="P:negative regulation of hepatocyte apoptotic process"/>
    <property type="evidence" value="ECO:0000250"/>
    <property type="project" value="UniProtKB"/>
</dbReference>
<dbReference type="GO" id="GO:0050995">
    <property type="term" value="P:negative regulation of lipid catabolic process"/>
    <property type="evidence" value="ECO:0000250"/>
    <property type="project" value="UniProtKB"/>
</dbReference>
<dbReference type="GO" id="GO:0032007">
    <property type="term" value="P:negative regulation of TOR signaling"/>
    <property type="evidence" value="ECO:0000250"/>
    <property type="project" value="UniProtKB"/>
</dbReference>
<dbReference type="GO" id="GO:1904262">
    <property type="term" value="P:negative regulation of TORC1 signaling"/>
    <property type="evidence" value="ECO:0000250"/>
    <property type="project" value="UniProtKB"/>
</dbReference>
<dbReference type="GO" id="GO:0010508">
    <property type="term" value="P:positive regulation of autophagy"/>
    <property type="evidence" value="ECO:0000250"/>
    <property type="project" value="UniProtKB"/>
</dbReference>
<dbReference type="GO" id="GO:0045821">
    <property type="term" value="P:positive regulation of glycolytic process"/>
    <property type="evidence" value="ECO:0000250"/>
    <property type="project" value="UniProtKB"/>
</dbReference>
<dbReference type="GO" id="GO:1990044">
    <property type="term" value="P:protein localization to lipid droplet"/>
    <property type="evidence" value="ECO:0000250"/>
    <property type="project" value="UniProtKB"/>
</dbReference>
<dbReference type="GO" id="GO:0042752">
    <property type="term" value="P:regulation of circadian rhythm"/>
    <property type="evidence" value="ECO:0000250"/>
    <property type="project" value="UniProtKB"/>
</dbReference>
<dbReference type="GO" id="GO:0010332">
    <property type="term" value="P:response to gamma radiation"/>
    <property type="evidence" value="ECO:0000250"/>
    <property type="project" value="UniProtKB"/>
</dbReference>
<dbReference type="GO" id="GO:0048511">
    <property type="term" value="P:rhythmic process"/>
    <property type="evidence" value="ECO:0007669"/>
    <property type="project" value="UniProtKB-KW"/>
</dbReference>
<dbReference type="GO" id="GO:0016055">
    <property type="term" value="P:Wnt signaling pathway"/>
    <property type="evidence" value="ECO:0007669"/>
    <property type="project" value="UniProtKB-KW"/>
</dbReference>
<dbReference type="CDD" id="cd12199">
    <property type="entry name" value="AMPKA1_C"/>
    <property type="match status" value="1"/>
</dbReference>
<dbReference type="CDD" id="cd14079">
    <property type="entry name" value="STKc_AMPK_alpha"/>
    <property type="match status" value="1"/>
</dbReference>
<dbReference type="CDD" id="cd14403">
    <property type="entry name" value="UBA_AID_AAPK1"/>
    <property type="match status" value="1"/>
</dbReference>
<dbReference type="FunFam" id="1.10.510.10:FF:000079">
    <property type="entry name" value="Non-specific serine/threonine protein kinase"/>
    <property type="match status" value="1"/>
</dbReference>
<dbReference type="FunFam" id="1.10.8.10:FF:000014">
    <property type="entry name" value="Non-specific serine/threonine protein kinase"/>
    <property type="match status" value="1"/>
</dbReference>
<dbReference type="FunFam" id="3.30.200.20:FF:000136">
    <property type="entry name" value="Non-specific serine/threonine protein kinase"/>
    <property type="match status" value="1"/>
</dbReference>
<dbReference type="FunFam" id="3.30.310.80:FF:000003">
    <property type="entry name" value="Non-specific serine/threonine protein kinase"/>
    <property type="match status" value="1"/>
</dbReference>
<dbReference type="Gene3D" id="1.10.8.10">
    <property type="entry name" value="DNA helicase RuvA subunit, C-terminal domain"/>
    <property type="match status" value="1"/>
</dbReference>
<dbReference type="Gene3D" id="3.30.310.80">
    <property type="entry name" value="Kinase associated domain 1, KA1"/>
    <property type="match status" value="1"/>
</dbReference>
<dbReference type="Gene3D" id="3.30.200.20">
    <property type="entry name" value="Phosphorylase Kinase, domain 1"/>
    <property type="match status" value="1"/>
</dbReference>
<dbReference type="Gene3D" id="1.10.510.10">
    <property type="entry name" value="Transferase(Phosphotransferase) domain 1"/>
    <property type="match status" value="1"/>
</dbReference>
<dbReference type="InterPro" id="IPR032270">
    <property type="entry name" value="AMPK_C"/>
</dbReference>
<dbReference type="InterPro" id="IPR039137">
    <property type="entry name" value="AMPKA1_C"/>
</dbReference>
<dbReference type="InterPro" id="IPR028375">
    <property type="entry name" value="KA1/Ssp2_C"/>
</dbReference>
<dbReference type="InterPro" id="IPR011009">
    <property type="entry name" value="Kinase-like_dom_sf"/>
</dbReference>
<dbReference type="InterPro" id="IPR049020">
    <property type="entry name" value="PRKAA1/2_AID"/>
</dbReference>
<dbReference type="InterPro" id="IPR028797">
    <property type="entry name" value="PRKAA1_UBA"/>
</dbReference>
<dbReference type="InterPro" id="IPR000719">
    <property type="entry name" value="Prot_kinase_dom"/>
</dbReference>
<dbReference type="InterPro" id="IPR017441">
    <property type="entry name" value="Protein_kinase_ATP_BS"/>
</dbReference>
<dbReference type="InterPro" id="IPR008271">
    <property type="entry name" value="Ser/Thr_kinase_AS"/>
</dbReference>
<dbReference type="PANTHER" id="PTHR24346:SF87">
    <property type="entry name" value="ACETYL-COA CARBOXYLASE KINASE"/>
    <property type="match status" value="1"/>
</dbReference>
<dbReference type="PANTHER" id="PTHR24346">
    <property type="entry name" value="MAP/MICROTUBULE AFFINITY-REGULATING KINASE"/>
    <property type="match status" value="1"/>
</dbReference>
<dbReference type="Pfam" id="PF16579">
    <property type="entry name" value="AdenylateSensor"/>
    <property type="match status" value="1"/>
</dbReference>
<dbReference type="Pfam" id="PF21147">
    <property type="entry name" value="AMPK_alpha_AID"/>
    <property type="match status" value="1"/>
</dbReference>
<dbReference type="Pfam" id="PF00069">
    <property type="entry name" value="Pkinase"/>
    <property type="match status" value="1"/>
</dbReference>
<dbReference type="SMART" id="SM00220">
    <property type="entry name" value="S_TKc"/>
    <property type="match status" value="1"/>
</dbReference>
<dbReference type="SUPFAM" id="SSF103243">
    <property type="entry name" value="KA1-like"/>
    <property type="match status" value="1"/>
</dbReference>
<dbReference type="SUPFAM" id="SSF56112">
    <property type="entry name" value="Protein kinase-like (PK-like)"/>
    <property type="match status" value="1"/>
</dbReference>
<dbReference type="PROSITE" id="PS00107">
    <property type="entry name" value="PROTEIN_KINASE_ATP"/>
    <property type="match status" value="1"/>
</dbReference>
<dbReference type="PROSITE" id="PS50011">
    <property type="entry name" value="PROTEIN_KINASE_DOM"/>
    <property type="match status" value="1"/>
</dbReference>
<dbReference type="PROSITE" id="PS00108">
    <property type="entry name" value="PROTEIN_KINASE_ST"/>
    <property type="match status" value="1"/>
</dbReference>
<sequence>SWRKMATAEKQKHDGRVRIGHYILGDTLGVGTFGKVKVGKHELTGHKVAVKILNRQKIRSLDVVGKIRREIQNLKLFRHPHIIKLYQVISTPSDIFMVMEYVSGGELFDYICKNGRLDEKESRRLFQQILSGVDYCHRHMVVHRDLKPENVLLDAHMNAKIADFGLSNMMSDGEFLRTSCGSPNYAAPEVISGRLYAGPEVDIWSSGVILYALLCGTLPFDDDHVPTLFKKICDGIFYTPQYLNPSVISLLKHMLQVDPMKRATIKDIREHEWFKQDLPKYLFPEDPSYSSTMIDDEALKEVCEKFECSEEEVLSCLYNRNHQDPLAVAYHLIIDNRRIMNEAKDFYLATSPPDSFLDDHHLTRPHPERVPFLVAETPRARHTLDELNPQKSKHQGVRKAKWHLGIRSQSRPNDIMAEVCRAIKQLDYEWKVVNPYYLRVRRKNPVTSTYSKMSLQLYQVDSRTYLLDFRSIDDEITEAKSGTATPQRSGSVSNYRSCQRSDSDAEAQGKSSEVSLTSSVTSLDSSPVDLTPRPGSHTIEFFEMCANLIKILAQ</sequence>
<name>AAPK1_PONAB</name>